<organism>
    <name type="scientific">Chlamydia trachomatis serovar D (strain ATCC VR-885 / DSM 19411 / UW-3/Cx)</name>
    <dbReference type="NCBI Taxonomy" id="272561"/>
    <lineage>
        <taxon>Bacteria</taxon>
        <taxon>Pseudomonadati</taxon>
        <taxon>Chlamydiota</taxon>
        <taxon>Chlamydiia</taxon>
        <taxon>Chlamydiales</taxon>
        <taxon>Chlamydiaceae</taxon>
        <taxon>Chlamydia/Chlamydophila group</taxon>
        <taxon>Chlamydia</taxon>
    </lineage>
</organism>
<reference key="1">
    <citation type="journal article" date="1990" name="Mol. Microbiol.">
        <title>Cysteine-rich outer membrane proteins of Chlamydia trachomatis display compensatory sequence changes between biovariants.</title>
        <authorList>
            <person name="Allen J.E."/>
            <person name="Cerrone M.C."/>
            <person name="Beatty P.R."/>
            <person name="Stephens R.S."/>
        </authorList>
    </citation>
    <scope>NUCLEOTIDE SEQUENCE [GENOMIC DNA]</scope>
    <source>
        <strain>B/Tw-5/OT</strain>
    </source>
</reference>
<reference key="2">
    <citation type="journal article" date="1998" name="Science">
        <title>Genome sequence of an obligate intracellular pathogen of humans: Chlamydia trachomatis.</title>
        <authorList>
            <person name="Stephens R.S."/>
            <person name="Kalman S."/>
            <person name="Lammel C.J."/>
            <person name="Fan J."/>
            <person name="Marathe R."/>
            <person name="Aravind L."/>
            <person name="Mitchell W.P."/>
            <person name="Olinger L."/>
            <person name="Tatusov R.L."/>
            <person name="Zhao Q."/>
            <person name="Koonin E.V."/>
            <person name="Davis R.W."/>
        </authorList>
    </citation>
    <scope>NUCLEOTIDE SEQUENCE [LARGE SCALE GENOMIC DNA]</scope>
    <source>
        <strain>ATCC VR-885 / DSM 19411 / UW-3/Cx</strain>
    </source>
</reference>
<name>OMCBD_CHLTR</name>
<evidence type="ECO:0000250" key="1"/>
<evidence type="ECO:0000255" key="2"/>
<evidence type="ECO:0000256" key="3">
    <source>
        <dbReference type="SAM" id="MobiDB-lite"/>
    </source>
</evidence>
<evidence type="ECO:0000305" key="4"/>
<accession>P0CC04</accession>
<accession>P18151</accession>
<dbReference type="EMBL" id="AE001273">
    <property type="protein sequence ID" value="AAC68042.1"/>
    <property type="status" value="ALT_INIT"/>
    <property type="molecule type" value="Genomic_DNA"/>
</dbReference>
<dbReference type="PIR" id="D71515">
    <property type="entry name" value="D71515"/>
</dbReference>
<dbReference type="RefSeq" id="NP_219955.1">
    <property type="nucleotide sequence ID" value="NC_000117.1"/>
</dbReference>
<dbReference type="STRING" id="272561.CT_443"/>
<dbReference type="EnsemblBacteria" id="AAC68042">
    <property type="protein sequence ID" value="AAC68042"/>
    <property type="gene ID" value="CT_443"/>
</dbReference>
<dbReference type="GeneID" id="884223"/>
<dbReference type="KEGG" id="ctr:CT_443"/>
<dbReference type="PATRIC" id="fig|272561.5.peg.478"/>
<dbReference type="HOGENOM" id="CLU_029611_0_0_0"/>
<dbReference type="InParanoid" id="P0CC04"/>
<dbReference type="OrthoDB" id="16744at2"/>
<dbReference type="Proteomes" id="UP000000431">
    <property type="component" value="Chromosome"/>
</dbReference>
<dbReference type="GO" id="GO:0042597">
    <property type="term" value="C:periplasmic space"/>
    <property type="evidence" value="ECO:0007669"/>
    <property type="project" value="UniProtKB-SubCell"/>
</dbReference>
<dbReference type="GO" id="GO:0005201">
    <property type="term" value="F:extracellular matrix structural constituent"/>
    <property type="evidence" value="ECO:0007669"/>
    <property type="project" value="InterPro"/>
</dbReference>
<dbReference type="GO" id="GO:0008360">
    <property type="term" value="P:regulation of cell shape"/>
    <property type="evidence" value="ECO:0007669"/>
    <property type="project" value="UniProtKB-KW"/>
</dbReference>
<dbReference type="Gene3D" id="2.60.40.10">
    <property type="entry name" value="Immunoglobulins"/>
    <property type="match status" value="1"/>
</dbReference>
<dbReference type="InterPro" id="IPR003506">
    <property type="entry name" value="Chlam_OMP6"/>
</dbReference>
<dbReference type="InterPro" id="IPR051172">
    <property type="entry name" value="Chlamydia_OmcB"/>
</dbReference>
<dbReference type="InterPro" id="IPR047589">
    <property type="entry name" value="DUF11_rpt"/>
</dbReference>
<dbReference type="InterPro" id="IPR013783">
    <property type="entry name" value="Ig-like_fold"/>
</dbReference>
<dbReference type="InterPro" id="IPR001434">
    <property type="entry name" value="OmcB-like_DUF11"/>
</dbReference>
<dbReference type="NCBIfam" id="TIGR01451">
    <property type="entry name" value="B_ant_repeat"/>
    <property type="match status" value="1"/>
</dbReference>
<dbReference type="PANTHER" id="PTHR34819">
    <property type="entry name" value="LARGE CYSTEINE-RICH PERIPLASMIC PROTEIN OMCB"/>
    <property type="match status" value="1"/>
</dbReference>
<dbReference type="PANTHER" id="PTHR34819:SF4">
    <property type="entry name" value="LARGE CYSTEINE-RICH PERIPLASMIC PROTEIN OMCB"/>
    <property type="match status" value="1"/>
</dbReference>
<dbReference type="Pfam" id="PF03504">
    <property type="entry name" value="Chlam_OMP6"/>
    <property type="match status" value="1"/>
</dbReference>
<dbReference type="Pfam" id="PF01345">
    <property type="entry name" value="DUF11"/>
    <property type="match status" value="3"/>
</dbReference>
<dbReference type="PRINTS" id="PR01336">
    <property type="entry name" value="CHLAMIDIAOM6"/>
</dbReference>
<keyword id="KW-0133">Cell shape</keyword>
<keyword id="KW-1015">Disulfide bond</keyword>
<keyword id="KW-0574">Periplasm</keyword>
<keyword id="KW-1185">Reference proteome</keyword>
<keyword id="KW-0732">Signal</keyword>
<sequence length="547" mass="58694">MNKLIRRAVTIFAVTSVASLFASGVLETSMAESLSTNVISLADTKAKDNTSHKSKKARKNHSKETPVDRKEVAPVHESKATGPKQDSCFGRMYTVKVNDDRNVEITQAVPEYATVGSPYPIEITATGKRDCVDVIITQQLPCEAEFVRSDPATTPTADGKLVWKIDRLGQGEKSKITVWVKPLKEGCCFTAATVCACPEIRSVTKCGQPAICVKQEGPENACLRCPVVYKINIVNQGTATARNVVVENPVPDGYAHSSGQRVLTFTLGDMQPGEHRTITVEFCPLKRGRATNIATVSYCGGHKNTASVTTVINEPCVQVSIAGADWSYVCKPVEYVISVSNPGDLVLRDVVVEDTLSPGVTVLEAAGAQISCNKVVWTVKELNPGESLQYKVLVRAQTPGQFTNNVVVKSCSDCGTCTSCAEATTYWKGVAATHMCVVDTCDPVCVGENTVYRICVTNRGSAEDTNVSLMLKFSKELQPVSFSGPTKGTITGNTVVFDSLPRLGSKETVEFSVTLKAVSAGDARGEAILSSDTLTVPVSDTENTHIY</sequence>
<protein>
    <recommendedName>
        <fullName>Large cysteine-rich periplasmic protein OmcB</fullName>
        <shortName>Large-CRP</shortName>
    </recommendedName>
    <alternativeName>
        <fullName>60 kDa cysteine-rich OMP</fullName>
    </alternativeName>
    <alternativeName>
        <fullName>60 kDa outer membrane protein</fullName>
    </alternativeName>
    <alternativeName>
        <fullName>Cysteine-rich outer membrane protein</fullName>
        <shortName>CRP</shortName>
    </alternativeName>
</protein>
<proteinExistence type="evidence at transcript level"/>
<feature type="signal peptide" evidence="2">
    <location>
        <begin position="1"/>
        <end position="22"/>
    </location>
</feature>
<feature type="propeptide" id="PRO_0000020170" evidence="2">
    <location>
        <begin position="23"/>
        <end position="40"/>
    </location>
</feature>
<feature type="chain" id="PRO_0000020171" description="Large cysteine-rich periplasmic protein OmcB">
    <location>
        <begin position="41"/>
        <end position="547"/>
    </location>
</feature>
<feature type="region of interest" description="Disordered" evidence="3">
    <location>
        <begin position="45"/>
        <end position="84"/>
    </location>
</feature>
<feature type="compositionally biased region" description="Basic residues" evidence="3">
    <location>
        <begin position="52"/>
        <end position="61"/>
    </location>
</feature>
<feature type="compositionally biased region" description="Basic and acidic residues" evidence="3">
    <location>
        <begin position="62"/>
        <end position="79"/>
    </location>
</feature>
<feature type="sequence variant" description="In strain: B/TW-05/OT.">
    <original>I</original>
    <variation>V</variation>
    <location>
        <position position="233"/>
    </location>
</feature>
<comment type="function">
    <text evidence="1">In elementary bodies (EBs, the infectious stage, which is able to survive outside the host cell) provides the structural integrity of the outer envelope through disulfide cross-links with the small cysteine-rich protein and the major outer membrane protein. It has been described in publications as the Sarkosyl-insoluble COMC (Chlamydia outer membrane complex), and serves as the functional equivalent of peptidoglycan (By similarity).</text>
</comment>
<comment type="subunit">
    <text evidence="1">Part of a disulfide cross-linked outer membrane complex (COMC) composed of the major outer membrane porin (MOMP), the small cysteine-rich protein (OmcA) and the large cysteine-rich periplasmic protein (OmcB).</text>
</comment>
<comment type="subcellular location">
    <subcellularLocation>
        <location evidence="4">Periplasm</location>
    </subcellularLocation>
</comment>
<comment type="developmental stage">
    <text>It is present but the disulfide bonds are reduced in the intracellular reticulate bodies (RBs).</text>
</comment>
<comment type="caution">
    <text evidence="4">Was thought to be an outer membrane protein as it is part of a disulfide cross-linked complex that is insoluble in the detergent Sarkosyl; however based on experiments in C.psittaci it is likely to be periplasmic.</text>
</comment>
<comment type="sequence caution" evidence="4">
    <conflict type="erroneous initiation">
        <sequence resource="EMBL-CDS" id="AAC68042"/>
    </conflict>
</comment>
<gene>
    <name type="primary">omcB</name>
    <name type="synonym">omp2</name>
    <name type="synonym">omp2B</name>
    <name type="ordered locus">CT_443</name>
</gene>